<organism>
    <name type="scientific">Polynucleobacter asymbioticus (strain DSM 18221 / CIP 109841 / QLW-P1DMWA-1)</name>
    <name type="common">Polynucleobacter necessarius subsp. asymbioticus</name>
    <dbReference type="NCBI Taxonomy" id="312153"/>
    <lineage>
        <taxon>Bacteria</taxon>
        <taxon>Pseudomonadati</taxon>
        <taxon>Pseudomonadota</taxon>
        <taxon>Betaproteobacteria</taxon>
        <taxon>Burkholderiales</taxon>
        <taxon>Burkholderiaceae</taxon>
        <taxon>Polynucleobacter</taxon>
    </lineage>
</organism>
<dbReference type="EC" id="7.1.1.-" evidence="2"/>
<dbReference type="EMBL" id="CP000655">
    <property type="protein sequence ID" value="ABP34266.1"/>
    <property type="molecule type" value="Genomic_DNA"/>
</dbReference>
<dbReference type="RefSeq" id="WP_011902891.1">
    <property type="nucleotide sequence ID" value="NC_009379.1"/>
</dbReference>
<dbReference type="SMR" id="A4SXQ2"/>
<dbReference type="KEGG" id="pnu:Pnuc_1050"/>
<dbReference type="eggNOG" id="COG0377">
    <property type="taxonomic scope" value="Bacteria"/>
</dbReference>
<dbReference type="HOGENOM" id="CLU_055737_7_3_4"/>
<dbReference type="Proteomes" id="UP000000231">
    <property type="component" value="Chromosome"/>
</dbReference>
<dbReference type="GO" id="GO:0005886">
    <property type="term" value="C:plasma membrane"/>
    <property type="evidence" value="ECO:0007669"/>
    <property type="project" value="UniProtKB-SubCell"/>
</dbReference>
<dbReference type="GO" id="GO:0045271">
    <property type="term" value="C:respiratory chain complex I"/>
    <property type="evidence" value="ECO:0007669"/>
    <property type="project" value="TreeGrafter"/>
</dbReference>
<dbReference type="GO" id="GO:0051539">
    <property type="term" value="F:4 iron, 4 sulfur cluster binding"/>
    <property type="evidence" value="ECO:0007669"/>
    <property type="project" value="UniProtKB-KW"/>
</dbReference>
<dbReference type="GO" id="GO:0005506">
    <property type="term" value="F:iron ion binding"/>
    <property type="evidence" value="ECO:0007669"/>
    <property type="project" value="UniProtKB-UniRule"/>
</dbReference>
<dbReference type="GO" id="GO:0008137">
    <property type="term" value="F:NADH dehydrogenase (ubiquinone) activity"/>
    <property type="evidence" value="ECO:0007669"/>
    <property type="project" value="InterPro"/>
</dbReference>
<dbReference type="GO" id="GO:0050136">
    <property type="term" value="F:NADH:ubiquinone reductase (non-electrogenic) activity"/>
    <property type="evidence" value="ECO:0007669"/>
    <property type="project" value="UniProtKB-UniRule"/>
</dbReference>
<dbReference type="GO" id="GO:0048038">
    <property type="term" value="F:quinone binding"/>
    <property type="evidence" value="ECO:0007669"/>
    <property type="project" value="UniProtKB-KW"/>
</dbReference>
<dbReference type="GO" id="GO:0009060">
    <property type="term" value="P:aerobic respiration"/>
    <property type="evidence" value="ECO:0007669"/>
    <property type="project" value="TreeGrafter"/>
</dbReference>
<dbReference type="GO" id="GO:0015990">
    <property type="term" value="P:electron transport coupled proton transport"/>
    <property type="evidence" value="ECO:0007669"/>
    <property type="project" value="TreeGrafter"/>
</dbReference>
<dbReference type="FunFam" id="3.40.50.12280:FF:000001">
    <property type="entry name" value="NADH-quinone oxidoreductase subunit B 2"/>
    <property type="match status" value="1"/>
</dbReference>
<dbReference type="Gene3D" id="3.40.50.12280">
    <property type="match status" value="1"/>
</dbReference>
<dbReference type="HAMAP" id="MF_01356">
    <property type="entry name" value="NDH1_NuoB"/>
    <property type="match status" value="1"/>
</dbReference>
<dbReference type="InterPro" id="IPR006137">
    <property type="entry name" value="NADH_UbQ_OxRdtase-like_20kDa"/>
</dbReference>
<dbReference type="InterPro" id="IPR006138">
    <property type="entry name" value="NADH_UQ_OxRdtase_20Kd_su"/>
</dbReference>
<dbReference type="NCBIfam" id="TIGR01957">
    <property type="entry name" value="nuoB_fam"/>
    <property type="match status" value="1"/>
</dbReference>
<dbReference type="NCBIfam" id="NF005012">
    <property type="entry name" value="PRK06411.1"/>
    <property type="match status" value="1"/>
</dbReference>
<dbReference type="PANTHER" id="PTHR11995">
    <property type="entry name" value="NADH DEHYDROGENASE"/>
    <property type="match status" value="1"/>
</dbReference>
<dbReference type="PANTHER" id="PTHR11995:SF14">
    <property type="entry name" value="NADH DEHYDROGENASE [UBIQUINONE] IRON-SULFUR PROTEIN 7, MITOCHONDRIAL"/>
    <property type="match status" value="1"/>
</dbReference>
<dbReference type="Pfam" id="PF01058">
    <property type="entry name" value="Oxidored_q6"/>
    <property type="match status" value="1"/>
</dbReference>
<dbReference type="SUPFAM" id="SSF56770">
    <property type="entry name" value="HydA/Nqo6-like"/>
    <property type="match status" value="1"/>
</dbReference>
<dbReference type="PROSITE" id="PS01150">
    <property type="entry name" value="COMPLEX1_20K"/>
    <property type="match status" value="1"/>
</dbReference>
<sequence length="160" mass="17553">MALEGVLKEGFVTTTADQLINWTRNGSLWPMTFGLACCAVEMMHAGASRYDLDRFGVVFRPSPRQSDLMIVAGTLCNKMAPALRKVYDQMPEPRWVISMGSCANGGGYYHNSYSVVRGCDRIVPVDIYVPGCPPTAEALIYGIIQLQSKIARTSTIARKA</sequence>
<keyword id="KW-0004">4Fe-4S</keyword>
<keyword id="KW-1003">Cell membrane</keyword>
<keyword id="KW-0408">Iron</keyword>
<keyword id="KW-0411">Iron-sulfur</keyword>
<keyword id="KW-0472">Membrane</keyword>
<keyword id="KW-0479">Metal-binding</keyword>
<keyword id="KW-0520">NAD</keyword>
<keyword id="KW-0874">Quinone</keyword>
<keyword id="KW-1185">Reference proteome</keyword>
<keyword id="KW-1278">Translocase</keyword>
<keyword id="KW-0813">Transport</keyword>
<keyword id="KW-0830">Ubiquinone</keyword>
<reference key="1">
    <citation type="journal article" date="2012" name="Stand. Genomic Sci.">
        <title>Complete genome sequence of Polynucleobacter necessarius subsp. asymbioticus type strain (QLW-P1DMWA-1(T)).</title>
        <authorList>
            <person name="Meincke L."/>
            <person name="Copeland A."/>
            <person name="Lapidus A."/>
            <person name="Lucas S."/>
            <person name="Berry K.W."/>
            <person name="Del Rio T.G."/>
            <person name="Hammon N."/>
            <person name="Dalin E."/>
            <person name="Tice H."/>
            <person name="Pitluck S."/>
            <person name="Richardson P."/>
            <person name="Bruce D."/>
            <person name="Goodwin L."/>
            <person name="Han C."/>
            <person name="Tapia R."/>
            <person name="Detter J.C."/>
            <person name="Schmutz J."/>
            <person name="Brettin T."/>
            <person name="Larimer F."/>
            <person name="Land M."/>
            <person name="Hauser L."/>
            <person name="Kyrpides N.C."/>
            <person name="Ivanova N."/>
            <person name="Goker M."/>
            <person name="Woyke T."/>
            <person name="Wu Q.L."/>
            <person name="Pockl M."/>
            <person name="Hahn M.W."/>
            <person name="Klenk H.P."/>
        </authorList>
    </citation>
    <scope>NUCLEOTIDE SEQUENCE [LARGE SCALE GENOMIC DNA]</scope>
    <source>
        <strain>DSM 18221 / CIP 109841 / QLW-P1DMWA-1</strain>
    </source>
</reference>
<protein>
    <recommendedName>
        <fullName evidence="2">NADH-quinone oxidoreductase subunit B</fullName>
        <ecNumber evidence="2">7.1.1.-</ecNumber>
    </recommendedName>
    <alternativeName>
        <fullName evidence="2">NADH dehydrogenase I subunit B</fullName>
    </alternativeName>
    <alternativeName>
        <fullName evidence="2">NDH-1 subunit B</fullName>
    </alternativeName>
</protein>
<feature type="chain" id="PRO_0000358447" description="NADH-quinone oxidoreductase subunit B">
    <location>
        <begin position="1"/>
        <end position="160"/>
    </location>
</feature>
<feature type="binding site" evidence="2">
    <location>
        <position position="37"/>
    </location>
    <ligand>
        <name>[4Fe-4S] cluster</name>
        <dbReference type="ChEBI" id="CHEBI:49883"/>
    </ligand>
</feature>
<feature type="binding site" evidence="2">
    <location>
        <position position="38"/>
    </location>
    <ligand>
        <name>[4Fe-4S] cluster</name>
        <dbReference type="ChEBI" id="CHEBI:49883"/>
    </ligand>
</feature>
<feature type="binding site" evidence="2">
    <location>
        <position position="102"/>
    </location>
    <ligand>
        <name>[4Fe-4S] cluster</name>
        <dbReference type="ChEBI" id="CHEBI:49883"/>
    </ligand>
</feature>
<feature type="binding site" evidence="2">
    <location>
        <position position="132"/>
    </location>
    <ligand>
        <name>[4Fe-4S] cluster</name>
        <dbReference type="ChEBI" id="CHEBI:49883"/>
    </ligand>
</feature>
<evidence type="ECO:0000250" key="1"/>
<evidence type="ECO:0000255" key="2">
    <source>
        <dbReference type="HAMAP-Rule" id="MF_01356"/>
    </source>
</evidence>
<accession>A4SXQ2</accession>
<proteinExistence type="inferred from homology"/>
<gene>
    <name evidence="2" type="primary">nuoB</name>
    <name type="ordered locus">Pnuc_1050</name>
</gene>
<name>NUOB_POLAQ</name>
<comment type="function">
    <text evidence="1">NDH-1 shuttles electrons from NADH, via FMN and iron-sulfur (Fe-S) centers, to quinones in the respiratory chain. Couples the redox reaction to proton translocation (for every two electrons transferred, four hydrogen ions are translocated across the cytoplasmic membrane), and thus conserves the redox energy in a proton gradient (By similarity).</text>
</comment>
<comment type="catalytic activity">
    <reaction evidence="2">
        <text>a quinone + NADH + 5 H(+)(in) = a quinol + NAD(+) + 4 H(+)(out)</text>
        <dbReference type="Rhea" id="RHEA:57888"/>
        <dbReference type="ChEBI" id="CHEBI:15378"/>
        <dbReference type="ChEBI" id="CHEBI:24646"/>
        <dbReference type="ChEBI" id="CHEBI:57540"/>
        <dbReference type="ChEBI" id="CHEBI:57945"/>
        <dbReference type="ChEBI" id="CHEBI:132124"/>
    </reaction>
</comment>
<comment type="cofactor">
    <cofactor evidence="2">
        <name>[4Fe-4S] cluster</name>
        <dbReference type="ChEBI" id="CHEBI:49883"/>
    </cofactor>
    <text evidence="2">Binds 1 [4Fe-4S] cluster.</text>
</comment>
<comment type="subunit">
    <text evidence="2">NDH-1 is composed of 14 different subunits. Subunits NuoB, C, D, E, F, and G constitute the peripheral sector of the complex.</text>
</comment>
<comment type="subcellular location">
    <subcellularLocation>
        <location evidence="2">Cell membrane</location>
        <topology evidence="2">Peripheral membrane protein</topology>
        <orientation evidence="2">Cytoplasmic side</orientation>
    </subcellularLocation>
</comment>
<comment type="similarity">
    <text evidence="2">Belongs to the complex I 20 kDa subunit family.</text>
</comment>